<keyword id="KW-0997">Cell inner membrane</keyword>
<keyword id="KW-1003">Cell membrane</keyword>
<keyword id="KW-0407">Ion channel</keyword>
<keyword id="KW-0406">Ion transport</keyword>
<keyword id="KW-0472">Membrane</keyword>
<keyword id="KW-1185">Reference proteome</keyword>
<keyword id="KW-0732">Signal</keyword>
<keyword id="KW-0812">Transmembrane</keyword>
<keyword id="KW-1133">Transmembrane helix</keyword>
<keyword id="KW-0813">Transport</keyword>
<evidence type="ECO:0000255" key="1"/>
<evidence type="ECO:0000269" key="2">
    <source>
    </source>
</evidence>
<evidence type="ECO:0000305" key="3"/>
<protein>
    <recommendedName>
        <fullName>Miniconductance mechanosensitive channel MscM</fullName>
    </recommendedName>
</protein>
<reference key="1">
    <citation type="journal article" date="1995" name="Nucleic Acids Res.">
        <title>Analysis of the Escherichia coli genome VI: DNA sequence of the region from 92.8 through 100 minutes.</title>
        <authorList>
            <person name="Burland V.D."/>
            <person name="Plunkett G. III"/>
            <person name="Sofia H.J."/>
            <person name="Daniels D.L."/>
            <person name="Blattner F.R."/>
        </authorList>
    </citation>
    <scope>NUCLEOTIDE SEQUENCE [LARGE SCALE GENOMIC DNA]</scope>
    <source>
        <strain>K12 / MG1655 / ATCC 47076</strain>
    </source>
</reference>
<reference key="2">
    <citation type="journal article" date="1997" name="Science">
        <title>The complete genome sequence of Escherichia coli K-12.</title>
        <authorList>
            <person name="Blattner F.R."/>
            <person name="Plunkett G. III"/>
            <person name="Bloch C.A."/>
            <person name="Perna N.T."/>
            <person name="Burland V."/>
            <person name="Riley M."/>
            <person name="Collado-Vides J."/>
            <person name="Glasner J.D."/>
            <person name="Rode C.K."/>
            <person name="Mayhew G.F."/>
            <person name="Gregor J."/>
            <person name="Davis N.W."/>
            <person name="Kirkpatrick H.A."/>
            <person name="Goeden M.A."/>
            <person name="Rose D.J."/>
            <person name="Mau B."/>
            <person name="Shao Y."/>
        </authorList>
    </citation>
    <scope>NUCLEOTIDE SEQUENCE [LARGE SCALE GENOMIC DNA]</scope>
    <scope>SEQUENCE REVISION TO 1015</scope>
    <source>
        <strain>K12 / MG1655 / ATCC 47076</strain>
    </source>
</reference>
<reference key="3">
    <citation type="journal article" date="2006" name="Mol. Syst. Biol.">
        <title>Highly accurate genome sequences of Escherichia coli K-12 strains MG1655 and W3110.</title>
        <authorList>
            <person name="Hayashi K."/>
            <person name="Morooka N."/>
            <person name="Yamamoto Y."/>
            <person name="Fujita K."/>
            <person name="Isono K."/>
            <person name="Choi S."/>
            <person name="Ohtsubo E."/>
            <person name="Baba T."/>
            <person name="Wanner B.L."/>
            <person name="Mori H."/>
            <person name="Horiuchi T."/>
        </authorList>
    </citation>
    <scope>NUCLEOTIDE SEQUENCE [LARGE SCALE GENOMIC DNA]</scope>
    <source>
        <strain>K12 / W3110 / ATCC 27325 / DSM 5911</strain>
    </source>
</reference>
<reference key="4">
    <citation type="journal article" date="1988" name="J. Biol. Chem.">
        <title>Structural characterization of Escherichia coli phosphatidylserine decarboxylase.</title>
        <authorList>
            <person name="Li Q.-X."/>
            <person name="Dowhan W."/>
        </authorList>
    </citation>
    <scope>NUCLEOTIDE SEQUENCE [GENOMIC DNA] OF 1-27</scope>
    <source>
        <strain>K12</strain>
    </source>
</reference>
<reference key="5">
    <citation type="journal article" date="2012" name="Channels">
        <title>Characterization of three novel mechanosensitive channel activities in Escherichia coli.</title>
        <authorList>
            <person name="Edwards M.D."/>
            <person name="Black S."/>
            <person name="Rasmussen T."/>
            <person name="Rasmussen A."/>
            <person name="Stokes N.R."/>
            <person name="Stephen T.L."/>
            <person name="Miller S."/>
            <person name="Booth I.R."/>
        </authorList>
    </citation>
    <scope>FUNCTION</scope>
    <scope>SUBUNIT</scope>
    <scope>SUBCELLULAR LOCATION</scope>
    <scope>GENE NAME</scope>
</reference>
<feature type="signal peptide" evidence="1">
    <location>
        <begin position="1"/>
        <end position="19"/>
    </location>
</feature>
<feature type="chain" id="PRO_0000036180" description="Miniconductance mechanosensitive channel MscM">
    <location>
        <begin position="20"/>
        <end position="1107"/>
    </location>
</feature>
<feature type="transmembrane region" description="Helical" evidence="1">
    <location>
        <begin position="467"/>
        <end position="487"/>
    </location>
</feature>
<feature type="transmembrane region" description="Helical" evidence="1">
    <location>
        <begin position="522"/>
        <end position="542"/>
    </location>
</feature>
<feature type="transmembrane region" description="Helical" evidence="1">
    <location>
        <begin position="551"/>
        <end position="571"/>
    </location>
</feature>
<feature type="transmembrane region" description="Helical" evidence="1">
    <location>
        <begin position="600"/>
        <end position="620"/>
    </location>
</feature>
<feature type="transmembrane region" description="Helical" evidence="1">
    <location>
        <begin position="628"/>
        <end position="648"/>
    </location>
</feature>
<feature type="transmembrane region" description="Helical" evidence="1">
    <location>
        <begin position="674"/>
        <end position="694"/>
    </location>
</feature>
<feature type="transmembrane region" description="Helical" evidence="1">
    <location>
        <begin position="698"/>
        <end position="718"/>
    </location>
</feature>
<feature type="transmembrane region" description="Helical" evidence="1">
    <location>
        <begin position="785"/>
        <end position="805"/>
    </location>
</feature>
<feature type="transmembrane region" description="Helical" evidence="1">
    <location>
        <begin position="828"/>
        <end position="848"/>
    </location>
</feature>
<feature type="transmembrane region" description="Helical" evidence="1">
    <location>
        <begin position="875"/>
        <end position="895"/>
    </location>
</feature>
<feature type="transmembrane region" description="Helical" evidence="1">
    <location>
        <begin position="910"/>
        <end position="930"/>
    </location>
</feature>
<feature type="sequence conflict" description="In Ref. 1; AAA97058." evidence="3" ref="1">
    <original>R</original>
    <variation>A</variation>
    <location>
        <position position="1015"/>
    </location>
</feature>
<sequence>MRLIITFLMAWCLSWGAYAATAPDSKQITQELEQAKAAKPAQPEVVEALQSALNALEERKGSLERIKQYQQVIDNYPKLSATLRAQLNNMRDEPRSVSPGMSTDALNQEILQVSSQLLDKSRQAQQEQERAREIADSLNQLPQQQTDARRQLNEIERRLGTLTGNTPLNQAQNFALQSDSARLKALVDELELAQLSANNRQELARLRSELAEKESQQLDAYLQALRNQLNSQRQLEAERALESTELLAENSADLPKDIVAQFKINRELSAALNQQAQRMDLVASQQRQAASQTLQVRQALNTLREQSQWLGSSNLLGEALRAQVARLPEMPKPQQLDTEMAQLRVQRLRYEDLLNKQPLLRQIHQADGQPLTAEQNRILEAQLRTQRELLNSLLQGGDTLLLELTKLKVSNGQLEDALKEVNEATHRYLFWTSDVRPMTIAWPLEIAQDLRRLISLDTFSQLGKASVMMLTSKETILPLFGALILVGCSIYSRRYFTRFLERSAAKVGKVTQDHFWLTLRTLFWSILVASPLPVLWMTLGYGLREAWPYPLAVAIGDGVTATVPLLWVVMICATFARPNGLFIAHFGWPRERVSRGMRYYLMSIGLIVPLIMALMMFDNLDDREFSGSLGRLCFILICGALAVVTLSLKKAGIPLYLNKEGSGDNITNHMLWNMMIGAPLVAILASAVGYLATAQALLARLETSVAIWFLLLVVYHVIRRWMLIQRRRLAFDRAKHRRAEMLAQRARGEEEAHHHSSPEGAIEVDESEVDLDAISAQSLRLVRSILMLIALLSVIVLWSEIHSAFGFLENISLWDVTSTVQGVESLEPITLGAVLIAILVFIITTQLVRNLPALLELAILQHLDLTPGTGYAITTITKYLLMLIGGLVGFSMIGIEWSKLQWLVAALGVGLGFGLQEIFANFISGLIILFEKPIRIGDTVTIRDLTGSVTKINTRATTISDWDRKEIIVPNKAFITEQFINWSLSDSVTRVVLTIPAPADANSEEVTEILLTAARRCSLVIDNPAPEVFLVDLQQGIQIFELRIYAAEMGHRMPLRHEIHQLILAGFHAHGIDMPFPPFQMRLESLNGKQTGRTLTSAGKGRQAGSL</sequence>
<gene>
    <name type="primary">mscM</name>
    <name type="synonym">yjeP</name>
    <name type="ordered locus">b4159</name>
    <name type="ordered locus">JW4120</name>
</gene>
<proteinExistence type="evidence at protein level"/>
<name>MSCM_ECOLI</name>
<comment type="function">
    <text evidence="2">Mechanosensitive channel that protects cells against hypoosmotic stress when highly overexpressed. Gates spontaneously in response to increased membrane tension.</text>
</comment>
<comment type="subunit">
    <text evidence="2">Homoheptamer.</text>
</comment>
<comment type="subcellular location">
    <subcellularLocation>
        <location evidence="2">Cell inner membrane</location>
        <topology evidence="2">Multi-pass membrane protein</topology>
    </subcellularLocation>
</comment>
<comment type="similarity">
    <text evidence="3">Belongs to the MscS (TC 1.A.23) family.</text>
</comment>
<comment type="sequence caution" evidence="3">
    <conflict type="erroneous initiation">
        <sequence resource="EMBL-CDS" id="AAA83897"/>
    </conflict>
</comment>
<accession>P39285</accession>
<accession>P76798</accession>
<accession>Q2M6E3</accession>
<dbReference type="EMBL" id="U14003">
    <property type="protein sequence ID" value="AAA97058.1"/>
    <property type="molecule type" value="Genomic_DNA"/>
</dbReference>
<dbReference type="EMBL" id="U00096">
    <property type="protein sequence ID" value="AAC77119.1"/>
    <property type="molecule type" value="Genomic_DNA"/>
</dbReference>
<dbReference type="EMBL" id="AP009048">
    <property type="protein sequence ID" value="BAE78163.1"/>
    <property type="molecule type" value="Genomic_DNA"/>
</dbReference>
<dbReference type="EMBL" id="J03916">
    <property type="protein sequence ID" value="AAA83897.1"/>
    <property type="status" value="ALT_INIT"/>
    <property type="molecule type" value="Genomic_DNA"/>
</dbReference>
<dbReference type="PIR" id="E65226">
    <property type="entry name" value="E65226"/>
</dbReference>
<dbReference type="RefSeq" id="NP_418583.1">
    <property type="nucleotide sequence ID" value="NC_000913.3"/>
</dbReference>
<dbReference type="RefSeq" id="WP_001236847.1">
    <property type="nucleotide sequence ID" value="NZ_STEB01000014.1"/>
</dbReference>
<dbReference type="SMR" id="P39285"/>
<dbReference type="BioGRID" id="4262029">
    <property type="interactions" value="308"/>
</dbReference>
<dbReference type="FunCoup" id="P39285">
    <property type="interactions" value="28"/>
</dbReference>
<dbReference type="IntAct" id="P39285">
    <property type="interactions" value="3"/>
</dbReference>
<dbReference type="STRING" id="511145.b4159"/>
<dbReference type="TCDB" id="1.A.23.1.3">
    <property type="family name" value="the small conductance mechanosensitive ion channel (mscs) family"/>
</dbReference>
<dbReference type="jPOST" id="P39285"/>
<dbReference type="PaxDb" id="511145-b4159"/>
<dbReference type="EnsemblBacteria" id="AAC77119">
    <property type="protein sequence ID" value="AAC77119"/>
    <property type="gene ID" value="b4159"/>
</dbReference>
<dbReference type="GeneID" id="948676"/>
<dbReference type="KEGG" id="ecj:JW4120"/>
<dbReference type="KEGG" id="eco:b4159"/>
<dbReference type="KEGG" id="ecoc:C3026_22480"/>
<dbReference type="PATRIC" id="fig|1411691.4.peg.2539"/>
<dbReference type="EchoBASE" id="EB2371"/>
<dbReference type="eggNOG" id="COG1511">
    <property type="taxonomic scope" value="Bacteria"/>
</dbReference>
<dbReference type="eggNOG" id="COG3264">
    <property type="taxonomic scope" value="Bacteria"/>
</dbReference>
<dbReference type="HOGENOM" id="CLU_007829_2_0_6"/>
<dbReference type="InParanoid" id="P39285"/>
<dbReference type="OMA" id="MALITFD"/>
<dbReference type="OrthoDB" id="9799209at2"/>
<dbReference type="PhylomeDB" id="P39285"/>
<dbReference type="BioCyc" id="EcoCyc:G7840-MONOMER"/>
<dbReference type="PRO" id="PR:P39285"/>
<dbReference type="Proteomes" id="UP000000625">
    <property type="component" value="Chromosome"/>
</dbReference>
<dbReference type="GO" id="GO:0005886">
    <property type="term" value="C:plasma membrane"/>
    <property type="evidence" value="ECO:0007669"/>
    <property type="project" value="UniProtKB-SubCell"/>
</dbReference>
<dbReference type="GO" id="GO:0008381">
    <property type="term" value="F:mechanosensitive monoatomic ion channel activity"/>
    <property type="evidence" value="ECO:0000269"/>
    <property type="project" value="EcoCyc"/>
</dbReference>
<dbReference type="GO" id="GO:0071470">
    <property type="term" value="P:cellular response to osmotic stress"/>
    <property type="evidence" value="ECO:0000269"/>
    <property type="project" value="EcoCyc"/>
</dbReference>
<dbReference type="FunFam" id="1.10.287.1260:FF:000002">
    <property type="entry name" value="Potassium efflux system KefA"/>
    <property type="match status" value="1"/>
</dbReference>
<dbReference type="Gene3D" id="1.10.287.1260">
    <property type="match status" value="1"/>
</dbReference>
<dbReference type="Gene3D" id="2.30.30.60">
    <property type="match status" value="1"/>
</dbReference>
<dbReference type="Gene3D" id="3.30.70.100">
    <property type="match status" value="1"/>
</dbReference>
<dbReference type="InterPro" id="IPR010920">
    <property type="entry name" value="LSM_dom_sf"/>
</dbReference>
<dbReference type="InterPro" id="IPR049142">
    <property type="entry name" value="MS_channel_1st"/>
</dbReference>
<dbReference type="InterPro" id="IPR049278">
    <property type="entry name" value="MS_channel_C"/>
</dbReference>
<dbReference type="InterPro" id="IPR052702">
    <property type="entry name" value="MscS-like_channel"/>
</dbReference>
<dbReference type="InterPro" id="IPR023408">
    <property type="entry name" value="MscS_beta-dom_sf"/>
</dbReference>
<dbReference type="InterPro" id="IPR006685">
    <property type="entry name" value="MscS_channel_2nd"/>
</dbReference>
<dbReference type="InterPro" id="IPR011066">
    <property type="entry name" value="MscS_channel_C_sf"/>
</dbReference>
<dbReference type="InterPro" id="IPR006686">
    <property type="entry name" value="MscS_channel_CS"/>
</dbReference>
<dbReference type="InterPro" id="IPR011014">
    <property type="entry name" value="MscS_channel_TM-2"/>
</dbReference>
<dbReference type="InterPro" id="IPR025692">
    <property type="entry name" value="MscS_IM_dom1"/>
</dbReference>
<dbReference type="InterPro" id="IPR024393">
    <property type="entry name" value="MscS_porin"/>
</dbReference>
<dbReference type="NCBIfam" id="NF008180">
    <property type="entry name" value="PRK10929.1"/>
    <property type="match status" value="1"/>
</dbReference>
<dbReference type="PANTHER" id="PTHR30347:SF9">
    <property type="entry name" value="MINICONDUCTANCE MECHANOSENSITIVE CHANNEL MSCM"/>
    <property type="match status" value="1"/>
</dbReference>
<dbReference type="PANTHER" id="PTHR30347">
    <property type="entry name" value="POTASSIUM CHANNEL RELATED"/>
    <property type="match status" value="1"/>
</dbReference>
<dbReference type="Pfam" id="PF21088">
    <property type="entry name" value="MS_channel_1st"/>
    <property type="match status" value="1"/>
</dbReference>
<dbReference type="Pfam" id="PF00924">
    <property type="entry name" value="MS_channel_2nd"/>
    <property type="match status" value="1"/>
</dbReference>
<dbReference type="Pfam" id="PF21082">
    <property type="entry name" value="MS_channel_3rd"/>
    <property type="match status" value="1"/>
</dbReference>
<dbReference type="Pfam" id="PF12795">
    <property type="entry name" value="MscS_porin"/>
    <property type="match status" value="1"/>
</dbReference>
<dbReference type="Pfam" id="PF12794">
    <property type="entry name" value="MscS_TM"/>
    <property type="match status" value="1"/>
</dbReference>
<dbReference type="SUPFAM" id="SSF82689">
    <property type="entry name" value="Mechanosensitive channel protein MscS (YggB), C-terminal domain"/>
    <property type="match status" value="1"/>
</dbReference>
<dbReference type="SUPFAM" id="SSF82861">
    <property type="entry name" value="Mechanosensitive channel protein MscS (YggB), transmembrane region"/>
    <property type="match status" value="1"/>
</dbReference>
<dbReference type="SUPFAM" id="SSF50182">
    <property type="entry name" value="Sm-like ribonucleoproteins"/>
    <property type="match status" value="1"/>
</dbReference>
<dbReference type="PROSITE" id="PS01246">
    <property type="entry name" value="UPF0003"/>
    <property type="match status" value="1"/>
</dbReference>
<organism>
    <name type="scientific">Escherichia coli (strain K12)</name>
    <dbReference type="NCBI Taxonomy" id="83333"/>
    <lineage>
        <taxon>Bacteria</taxon>
        <taxon>Pseudomonadati</taxon>
        <taxon>Pseudomonadota</taxon>
        <taxon>Gammaproteobacteria</taxon>
        <taxon>Enterobacterales</taxon>
        <taxon>Enterobacteriaceae</taxon>
        <taxon>Escherichia</taxon>
    </lineage>
</organism>